<dbReference type="EC" id="6.2.1.1" evidence="1"/>
<dbReference type="EMBL" id="CP001389">
    <property type="protein sequence ID" value="ACP27063.1"/>
    <property type="molecule type" value="Genomic_DNA"/>
</dbReference>
<dbReference type="RefSeq" id="WP_012709810.1">
    <property type="nucleotide sequence ID" value="NC_012587.1"/>
</dbReference>
<dbReference type="RefSeq" id="YP_002827816.1">
    <property type="nucleotide sequence ID" value="NC_012587.1"/>
</dbReference>
<dbReference type="SMR" id="C3MAS0"/>
<dbReference type="STRING" id="394.NGR_c33330"/>
<dbReference type="KEGG" id="rhi:NGR_c33330"/>
<dbReference type="PATRIC" id="fig|394.7.peg.6176"/>
<dbReference type="eggNOG" id="COG0365">
    <property type="taxonomic scope" value="Bacteria"/>
</dbReference>
<dbReference type="HOGENOM" id="CLU_000022_3_6_5"/>
<dbReference type="OrthoDB" id="9803968at2"/>
<dbReference type="Proteomes" id="UP000001054">
    <property type="component" value="Chromosome"/>
</dbReference>
<dbReference type="GO" id="GO:0005829">
    <property type="term" value="C:cytosol"/>
    <property type="evidence" value="ECO:0007669"/>
    <property type="project" value="TreeGrafter"/>
</dbReference>
<dbReference type="GO" id="GO:0003987">
    <property type="term" value="F:acetate-CoA ligase activity"/>
    <property type="evidence" value="ECO:0007669"/>
    <property type="project" value="UniProtKB-UniRule"/>
</dbReference>
<dbReference type="GO" id="GO:0016208">
    <property type="term" value="F:AMP binding"/>
    <property type="evidence" value="ECO:0007669"/>
    <property type="project" value="InterPro"/>
</dbReference>
<dbReference type="GO" id="GO:0005524">
    <property type="term" value="F:ATP binding"/>
    <property type="evidence" value="ECO:0007669"/>
    <property type="project" value="UniProtKB-KW"/>
</dbReference>
<dbReference type="GO" id="GO:0046872">
    <property type="term" value="F:metal ion binding"/>
    <property type="evidence" value="ECO:0007669"/>
    <property type="project" value="UniProtKB-KW"/>
</dbReference>
<dbReference type="GO" id="GO:0019427">
    <property type="term" value="P:acetyl-CoA biosynthetic process from acetate"/>
    <property type="evidence" value="ECO:0007669"/>
    <property type="project" value="InterPro"/>
</dbReference>
<dbReference type="CDD" id="cd05966">
    <property type="entry name" value="ACS"/>
    <property type="match status" value="1"/>
</dbReference>
<dbReference type="FunFam" id="3.30.300.30:FF:000004">
    <property type="entry name" value="Acetyl-coenzyme A synthetase"/>
    <property type="match status" value="1"/>
</dbReference>
<dbReference type="FunFam" id="3.40.50.12780:FF:000001">
    <property type="entry name" value="Acetyl-coenzyme A synthetase"/>
    <property type="match status" value="1"/>
</dbReference>
<dbReference type="Gene3D" id="3.30.300.30">
    <property type="match status" value="1"/>
</dbReference>
<dbReference type="Gene3D" id="3.40.50.12780">
    <property type="entry name" value="N-terminal domain of ligase-like"/>
    <property type="match status" value="1"/>
</dbReference>
<dbReference type="HAMAP" id="MF_01123">
    <property type="entry name" value="Ac_CoA_synth"/>
    <property type="match status" value="1"/>
</dbReference>
<dbReference type="InterPro" id="IPR011904">
    <property type="entry name" value="Ac_CoA_lig"/>
</dbReference>
<dbReference type="InterPro" id="IPR032387">
    <property type="entry name" value="ACAS_N"/>
</dbReference>
<dbReference type="InterPro" id="IPR025110">
    <property type="entry name" value="AMP-bd_C"/>
</dbReference>
<dbReference type="InterPro" id="IPR045851">
    <property type="entry name" value="AMP-bd_C_sf"/>
</dbReference>
<dbReference type="InterPro" id="IPR020845">
    <property type="entry name" value="AMP-binding_CS"/>
</dbReference>
<dbReference type="InterPro" id="IPR000873">
    <property type="entry name" value="AMP-dep_synth/lig_dom"/>
</dbReference>
<dbReference type="InterPro" id="IPR042099">
    <property type="entry name" value="ANL_N_sf"/>
</dbReference>
<dbReference type="NCBIfam" id="TIGR02188">
    <property type="entry name" value="Ac_CoA_lig_AcsA"/>
    <property type="match status" value="1"/>
</dbReference>
<dbReference type="NCBIfam" id="NF001208">
    <property type="entry name" value="PRK00174.1"/>
    <property type="match status" value="1"/>
</dbReference>
<dbReference type="PANTHER" id="PTHR24095">
    <property type="entry name" value="ACETYL-COENZYME A SYNTHETASE"/>
    <property type="match status" value="1"/>
</dbReference>
<dbReference type="PANTHER" id="PTHR24095:SF14">
    <property type="entry name" value="ACETYL-COENZYME A SYNTHETASE 1"/>
    <property type="match status" value="1"/>
</dbReference>
<dbReference type="Pfam" id="PF16177">
    <property type="entry name" value="ACAS_N"/>
    <property type="match status" value="1"/>
</dbReference>
<dbReference type="Pfam" id="PF00501">
    <property type="entry name" value="AMP-binding"/>
    <property type="match status" value="1"/>
</dbReference>
<dbReference type="Pfam" id="PF13193">
    <property type="entry name" value="AMP-binding_C"/>
    <property type="match status" value="1"/>
</dbReference>
<dbReference type="SUPFAM" id="SSF56801">
    <property type="entry name" value="Acetyl-CoA synthetase-like"/>
    <property type="match status" value="1"/>
</dbReference>
<dbReference type="PROSITE" id="PS00455">
    <property type="entry name" value="AMP_BINDING"/>
    <property type="match status" value="1"/>
</dbReference>
<reference key="1">
    <citation type="journal article" date="2009" name="Appl. Environ. Microbiol.">
        <title>Rhizobium sp. strain NGR234 possesses a remarkable number of secretion systems.</title>
        <authorList>
            <person name="Schmeisser C."/>
            <person name="Liesegang H."/>
            <person name="Krysciak D."/>
            <person name="Bakkou N."/>
            <person name="Le Quere A."/>
            <person name="Wollherr A."/>
            <person name="Heinemeyer I."/>
            <person name="Morgenstern B."/>
            <person name="Pommerening-Roeser A."/>
            <person name="Flores M."/>
            <person name="Palacios R."/>
            <person name="Brenner S."/>
            <person name="Gottschalk G."/>
            <person name="Schmitz R.A."/>
            <person name="Broughton W.J."/>
            <person name="Perret X."/>
            <person name="Strittmatter A.W."/>
            <person name="Streit W.R."/>
        </authorList>
    </citation>
    <scope>NUCLEOTIDE SEQUENCE [LARGE SCALE GENOMIC DNA]</scope>
    <source>
        <strain>NBRC 101917 / NGR234</strain>
    </source>
</reference>
<comment type="function">
    <text evidence="1">Catalyzes the conversion of acetate into acetyl-CoA (AcCoA), an essential intermediate at the junction of anabolic and catabolic pathways. AcsA undergoes a two-step reaction. In the first half reaction, AcsA combines acetate with ATP to form acetyl-adenylate (AcAMP) intermediate. In the second half reaction, it can then transfer the acetyl group from AcAMP to the sulfhydryl group of CoA, forming the product AcCoA.</text>
</comment>
<comment type="catalytic activity">
    <reaction evidence="1">
        <text>acetate + ATP + CoA = acetyl-CoA + AMP + diphosphate</text>
        <dbReference type="Rhea" id="RHEA:23176"/>
        <dbReference type="ChEBI" id="CHEBI:30089"/>
        <dbReference type="ChEBI" id="CHEBI:30616"/>
        <dbReference type="ChEBI" id="CHEBI:33019"/>
        <dbReference type="ChEBI" id="CHEBI:57287"/>
        <dbReference type="ChEBI" id="CHEBI:57288"/>
        <dbReference type="ChEBI" id="CHEBI:456215"/>
        <dbReference type="EC" id="6.2.1.1"/>
    </reaction>
</comment>
<comment type="cofactor">
    <cofactor evidence="1">
        <name>Mg(2+)</name>
        <dbReference type="ChEBI" id="CHEBI:18420"/>
    </cofactor>
</comment>
<comment type="PTM">
    <text evidence="1">Acetylated. Deacetylation by the SIR2-homolog deacetylase activates the enzyme.</text>
</comment>
<comment type="similarity">
    <text evidence="1">Belongs to the ATP-dependent AMP-binding enzyme family.</text>
</comment>
<sequence>MDVKTYPVLEAAKNRTLVDNATYLKWYEESVADPEKFWGEHGKRIEWFEPYTTVKNTSFDGNVSIKWFEDGLTNVSYNCIDRHLKTHGEKTAIIWEGDNPYIDKRITYNELYDKVCRLANVLKKHGVEKGDRVTIYMPMVPEAAYAMLACARIGAIHSVVFGGFSPEALAGRIVDCESTFVITCDEGLRGGKPVPLKENTEKAIDIAARQHVMVNKVLVVRRTGGKVPWAPGRDVWYHQEIATVEPHCPPEKMRAEDPLFILYTSGSTGKPKGVLHTTGGYLVYASMTHQYVFDYHDGDIYWCTADVGWVTGHSYIVYGPLANAATTLMFEGVPNFPDAGRFWEVIDKHKVNIFYTAPTAIRSLMGAGDDFVNRSSRSSLRLLGTVGEPINPEAWEWYYHVVGAERSPIVDTWWQTETGGILITPLPGATDLKPGSATRPFFGVKPQIVDNEGNVIDGPADGNLCITDSWPGQMRTVYGDHERFIQTYFSTYKGKYFTGDGCRRDEDGYYWITGRVDDVLNVSGHRLGTAEVESALVSHHLVSEAAVVGYPHPIKGQGIYCYVSLMAGEVGSDELRQELVKHVRSEIGPIATPDKIQFAPGLPKTRSGKIMRRILRKIAEDDFGSLGDTSTLADPAVVDDLIANRQNRG</sequence>
<gene>
    <name evidence="1" type="primary">acsA</name>
    <name type="ordered locus">NGR_c33330</name>
</gene>
<name>ACSA_SINFN</name>
<accession>C3MAS0</accession>
<evidence type="ECO:0000255" key="1">
    <source>
        <dbReference type="HAMAP-Rule" id="MF_01123"/>
    </source>
</evidence>
<organism>
    <name type="scientific">Sinorhizobium fredii (strain NBRC 101917 / NGR234)</name>
    <dbReference type="NCBI Taxonomy" id="394"/>
    <lineage>
        <taxon>Bacteria</taxon>
        <taxon>Pseudomonadati</taxon>
        <taxon>Pseudomonadota</taxon>
        <taxon>Alphaproteobacteria</taxon>
        <taxon>Hyphomicrobiales</taxon>
        <taxon>Rhizobiaceae</taxon>
        <taxon>Sinorhizobium/Ensifer group</taxon>
        <taxon>Sinorhizobium</taxon>
    </lineage>
</organism>
<proteinExistence type="inferred from homology"/>
<keyword id="KW-0007">Acetylation</keyword>
<keyword id="KW-0067">ATP-binding</keyword>
<keyword id="KW-0436">Ligase</keyword>
<keyword id="KW-0460">Magnesium</keyword>
<keyword id="KW-0479">Metal-binding</keyword>
<keyword id="KW-0547">Nucleotide-binding</keyword>
<keyword id="KW-1185">Reference proteome</keyword>
<protein>
    <recommendedName>
        <fullName evidence="1">Acetyl-coenzyme A synthetase</fullName>
        <shortName evidence="1">AcCoA synthetase</shortName>
        <shortName evidence="1">Acs</shortName>
        <ecNumber evidence="1">6.2.1.1</ecNumber>
    </recommendedName>
    <alternativeName>
        <fullName evidence="1">Acetate--CoA ligase</fullName>
    </alternativeName>
    <alternativeName>
        <fullName evidence="1">Acyl-activating enzyme</fullName>
    </alternativeName>
</protein>
<feature type="chain" id="PRO_1000164052" description="Acetyl-coenzyme A synthetase">
    <location>
        <begin position="1"/>
        <end position="649"/>
    </location>
</feature>
<feature type="binding site" evidence="1">
    <location>
        <begin position="189"/>
        <end position="192"/>
    </location>
    <ligand>
        <name>CoA</name>
        <dbReference type="ChEBI" id="CHEBI:57287"/>
    </ligand>
</feature>
<feature type="binding site" evidence="1">
    <location>
        <position position="311"/>
    </location>
    <ligand>
        <name>CoA</name>
        <dbReference type="ChEBI" id="CHEBI:57287"/>
    </ligand>
</feature>
<feature type="binding site" evidence="1">
    <location>
        <position position="335"/>
    </location>
    <ligand>
        <name>CoA</name>
        <dbReference type="ChEBI" id="CHEBI:57287"/>
    </ligand>
</feature>
<feature type="binding site" evidence="1">
    <location>
        <begin position="387"/>
        <end position="389"/>
    </location>
    <ligand>
        <name>ATP</name>
        <dbReference type="ChEBI" id="CHEBI:30616"/>
    </ligand>
</feature>
<feature type="binding site" evidence="1">
    <location>
        <begin position="411"/>
        <end position="416"/>
    </location>
    <ligand>
        <name>ATP</name>
        <dbReference type="ChEBI" id="CHEBI:30616"/>
    </ligand>
</feature>
<feature type="binding site" evidence="1">
    <location>
        <position position="500"/>
    </location>
    <ligand>
        <name>ATP</name>
        <dbReference type="ChEBI" id="CHEBI:30616"/>
    </ligand>
</feature>
<feature type="binding site" evidence="1">
    <location>
        <position position="515"/>
    </location>
    <ligand>
        <name>ATP</name>
        <dbReference type="ChEBI" id="CHEBI:30616"/>
    </ligand>
</feature>
<feature type="binding site" evidence="1">
    <location>
        <position position="523"/>
    </location>
    <ligand>
        <name>CoA</name>
        <dbReference type="ChEBI" id="CHEBI:57287"/>
    </ligand>
</feature>
<feature type="binding site" evidence="1">
    <location>
        <position position="526"/>
    </location>
    <ligand>
        <name>ATP</name>
        <dbReference type="ChEBI" id="CHEBI:30616"/>
    </ligand>
</feature>
<feature type="binding site" evidence="1">
    <location>
        <position position="537"/>
    </location>
    <ligand>
        <name>Mg(2+)</name>
        <dbReference type="ChEBI" id="CHEBI:18420"/>
    </ligand>
</feature>
<feature type="binding site" evidence="1">
    <location>
        <position position="539"/>
    </location>
    <ligand>
        <name>Mg(2+)</name>
        <dbReference type="ChEBI" id="CHEBI:18420"/>
    </ligand>
</feature>
<feature type="binding site" evidence="1">
    <location>
        <position position="542"/>
    </location>
    <ligand>
        <name>Mg(2+)</name>
        <dbReference type="ChEBI" id="CHEBI:18420"/>
    </ligand>
</feature>
<feature type="binding site" evidence="1">
    <location>
        <position position="584"/>
    </location>
    <ligand>
        <name>CoA</name>
        <dbReference type="ChEBI" id="CHEBI:57287"/>
    </ligand>
</feature>
<feature type="modified residue" description="N6-acetyllysine" evidence="1">
    <location>
        <position position="609"/>
    </location>
</feature>